<comment type="function">
    <text evidence="1">Hydrolyzes certain amino acid conjugates of the plant growth regulator indole-3-acetic acid (IAA).</text>
</comment>
<comment type="similarity">
    <text evidence="3">Belongs to the peptidase M20 family.</text>
</comment>
<proteinExistence type="evidence at transcript level"/>
<keyword id="KW-0378">Hydrolase</keyword>
<keyword id="KW-1185">Reference proteome</keyword>
<keyword id="KW-0732">Signal</keyword>
<organism>
    <name type="scientific">Oryza sativa subsp. japonica</name>
    <name type="common">Rice</name>
    <dbReference type="NCBI Taxonomy" id="39947"/>
    <lineage>
        <taxon>Eukaryota</taxon>
        <taxon>Viridiplantae</taxon>
        <taxon>Streptophyta</taxon>
        <taxon>Embryophyta</taxon>
        <taxon>Tracheophyta</taxon>
        <taxon>Spermatophyta</taxon>
        <taxon>Magnoliopsida</taxon>
        <taxon>Liliopsida</taxon>
        <taxon>Poales</taxon>
        <taxon>Poaceae</taxon>
        <taxon>BOP clade</taxon>
        <taxon>Oryzoideae</taxon>
        <taxon>Oryzeae</taxon>
        <taxon>Oryzinae</taxon>
        <taxon>Oryza</taxon>
        <taxon>Oryza sativa</taxon>
    </lineage>
</organism>
<sequence length="414" mass="43669">MSTTLGRELLEAARAPEFAGWLRGLRRRIHQHPELAFQEHRTSALVRAELDALGVAYVWPIAQTGVVATVAGAAGPGPVFALRADMDALPIQEMVEWEFKSLEDGKMHACGHDAHVAMLLVAAKLLQSRRDHFNGKVKLVFQPAEGGAGGYHVLKEGVLDDTQTIFAVHVATDLPAGVVGSRPGPFLAGSARFTATITGKGGHAAEPHLAVDPIVAASSAVLSLQQIVARETNPLQGAVVSVTTIKGGEAFNVIPESVTLGGTLRSMTTDGLSYLMNRIREVIEGQAAVNRCTAAVDFMEDKLRPYPATVNDEGMYAHAKAVAESMLGEANVTVSPMCMGAEDFGFYAQRIPAAFFGIGVGSNGNDGGGMAETTKNQLHSPHFVVDEEALPVGAAFHAAVAIEYLNKNASGRSA</sequence>
<reference key="1">
    <citation type="journal article" date="2005" name="Genome Res.">
        <title>Sequence, annotation, and analysis of synteny between rice chromosome 3 and diverged grass species.</title>
        <authorList>
            <consortium name="The rice chromosome 3 sequencing consortium"/>
            <person name="Buell C.R."/>
            <person name="Yuan Q."/>
            <person name="Ouyang S."/>
            <person name="Liu J."/>
            <person name="Zhu W."/>
            <person name="Wang A."/>
            <person name="Maiti R."/>
            <person name="Haas B."/>
            <person name="Wortman J."/>
            <person name="Pertea M."/>
            <person name="Jones K.M."/>
            <person name="Kim M."/>
            <person name="Overton L."/>
            <person name="Tsitrin T."/>
            <person name="Fadrosh D."/>
            <person name="Bera J."/>
            <person name="Weaver B."/>
            <person name="Jin S."/>
            <person name="Johri S."/>
            <person name="Reardon M."/>
            <person name="Webb K."/>
            <person name="Hill J."/>
            <person name="Moffat K."/>
            <person name="Tallon L."/>
            <person name="Van Aken S."/>
            <person name="Lewis M."/>
            <person name="Utterback T."/>
            <person name="Feldblyum T."/>
            <person name="Zismann V."/>
            <person name="Iobst S."/>
            <person name="Hsiao J."/>
            <person name="de Vazeille A.R."/>
            <person name="Salzberg S.L."/>
            <person name="White O."/>
            <person name="Fraser C.M."/>
            <person name="Yu Y."/>
            <person name="Kim H."/>
            <person name="Rambo T."/>
            <person name="Currie J."/>
            <person name="Collura K."/>
            <person name="Kernodle-Thompson S."/>
            <person name="Wei F."/>
            <person name="Kudrna K."/>
            <person name="Ammiraju J.S.S."/>
            <person name="Luo M."/>
            <person name="Goicoechea J.L."/>
            <person name="Wing R.A."/>
            <person name="Henry D."/>
            <person name="Oates R."/>
            <person name="Palmer M."/>
            <person name="Pries G."/>
            <person name="Saski C."/>
            <person name="Simmons J."/>
            <person name="Soderlund C."/>
            <person name="Nelson W."/>
            <person name="de la Bastide M."/>
            <person name="Spiegel L."/>
            <person name="Nascimento L."/>
            <person name="Huang E."/>
            <person name="Preston R."/>
            <person name="Zutavern T."/>
            <person name="Palmer L."/>
            <person name="O'Shaughnessy A."/>
            <person name="Dike S."/>
            <person name="McCombie W.R."/>
            <person name="Minx P."/>
            <person name="Cordum H."/>
            <person name="Wilson R."/>
            <person name="Jin W."/>
            <person name="Lee H.R."/>
            <person name="Jiang J."/>
            <person name="Jackson S."/>
        </authorList>
    </citation>
    <scope>NUCLEOTIDE SEQUENCE [LARGE SCALE GENOMIC DNA]</scope>
    <source>
        <strain>cv. Nipponbare</strain>
    </source>
</reference>
<reference key="2">
    <citation type="journal article" date="2005" name="Nature">
        <title>The map-based sequence of the rice genome.</title>
        <authorList>
            <consortium name="International rice genome sequencing project (IRGSP)"/>
        </authorList>
    </citation>
    <scope>NUCLEOTIDE SEQUENCE [LARGE SCALE GENOMIC DNA]</scope>
    <source>
        <strain>cv. Nipponbare</strain>
    </source>
</reference>
<reference key="3">
    <citation type="journal article" date="2008" name="Nucleic Acids Res.">
        <title>The rice annotation project database (RAP-DB): 2008 update.</title>
        <authorList>
            <consortium name="The rice annotation project (RAP)"/>
        </authorList>
    </citation>
    <scope>GENOME REANNOTATION</scope>
    <source>
        <strain>cv. Nipponbare</strain>
    </source>
</reference>
<reference key="4">
    <citation type="journal article" date="2013" name="Rice">
        <title>Improvement of the Oryza sativa Nipponbare reference genome using next generation sequence and optical map data.</title>
        <authorList>
            <person name="Kawahara Y."/>
            <person name="de la Bastide M."/>
            <person name="Hamilton J.P."/>
            <person name="Kanamori H."/>
            <person name="McCombie W.R."/>
            <person name="Ouyang S."/>
            <person name="Schwartz D.C."/>
            <person name="Tanaka T."/>
            <person name="Wu J."/>
            <person name="Zhou S."/>
            <person name="Childs K.L."/>
            <person name="Davidson R.M."/>
            <person name="Lin H."/>
            <person name="Quesada-Ocampo L."/>
            <person name="Vaillancourt B."/>
            <person name="Sakai H."/>
            <person name="Lee S.S."/>
            <person name="Kim J."/>
            <person name="Numa H."/>
            <person name="Itoh T."/>
            <person name="Buell C.R."/>
            <person name="Matsumoto T."/>
        </authorList>
    </citation>
    <scope>GENOME REANNOTATION</scope>
    <source>
        <strain>cv. Nipponbare</strain>
    </source>
</reference>
<evidence type="ECO:0000250" key="1"/>
<evidence type="ECO:0000255" key="2"/>
<evidence type="ECO:0000305" key="3"/>
<dbReference type="EC" id="3.5.1.-"/>
<dbReference type="EMBL" id="AC104487">
    <property type="protein sequence ID" value="AAO41146.1"/>
    <property type="molecule type" value="Genomic_DNA"/>
</dbReference>
<dbReference type="EMBL" id="DP000009">
    <property type="protein sequence ID" value="ABF99769.1"/>
    <property type="molecule type" value="Genomic_DNA"/>
</dbReference>
<dbReference type="EMBL" id="AP008209">
    <property type="protein sequence ID" value="BAF13742.1"/>
    <property type="molecule type" value="Genomic_DNA"/>
</dbReference>
<dbReference type="EMBL" id="AP014959">
    <property type="status" value="NOT_ANNOTATED_CDS"/>
    <property type="molecule type" value="Genomic_DNA"/>
</dbReference>
<dbReference type="SMR" id="Q851L6"/>
<dbReference type="FunCoup" id="Q851L6">
    <property type="interactions" value="416"/>
</dbReference>
<dbReference type="STRING" id="39947.Q851L6"/>
<dbReference type="MEROPS" id="M20.A02"/>
<dbReference type="PaxDb" id="39947-Q851L6"/>
<dbReference type="KEGG" id="dosa:Os03g0836900"/>
<dbReference type="InParanoid" id="Q851L6"/>
<dbReference type="OrthoDB" id="6119954at2759"/>
<dbReference type="PlantReactome" id="R-OSA-1119580">
    <property type="pathway name" value="IAA biosynthesis II"/>
</dbReference>
<dbReference type="Proteomes" id="UP000000763">
    <property type="component" value="Chromosome 3"/>
</dbReference>
<dbReference type="Proteomes" id="UP000059680">
    <property type="component" value="Chromosome 3"/>
</dbReference>
<dbReference type="GO" id="GO:0010179">
    <property type="term" value="F:IAA-Ala conjugate hydrolase activity"/>
    <property type="evidence" value="ECO:0000318"/>
    <property type="project" value="GO_Central"/>
</dbReference>
<dbReference type="GO" id="GO:0009850">
    <property type="term" value="P:auxin metabolic process"/>
    <property type="evidence" value="ECO:0000318"/>
    <property type="project" value="GO_Central"/>
</dbReference>
<dbReference type="CDD" id="cd08017">
    <property type="entry name" value="M20_IAA_Hyd"/>
    <property type="match status" value="1"/>
</dbReference>
<dbReference type="FunFam" id="3.30.70.360:FF:000001">
    <property type="entry name" value="N-acetyldiaminopimelate deacetylase"/>
    <property type="match status" value="1"/>
</dbReference>
<dbReference type="Gene3D" id="3.30.70.360">
    <property type="match status" value="1"/>
</dbReference>
<dbReference type="Gene3D" id="3.40.630.10">
    <property type="entry name" value="Zn peptidases"/>
    <property type="match status" value="1"/>
</dbReference>
<dbReference type="InterPro" id="IPR017439">
    <property type="entry name" value="Amidohydrolase"/>
</dbReference>
<dbReference type="InterPro" id="IPR036264">
    <property type="entry name" value="Bact_exopeptidase_dim_dom"/>
</dbReference>
<dbReference type="InterPro" id="IPR044757">
    <property type="entry name" value="ILR1-like_Hyd"/>
</dbReference>
<dbReference type="InterPro" id="IPR002933">
    <property type="entry name" value="Peptidase_M20"/>
</dbReference>
<dbReference type="InterPro" id="IPR011650">
    <property type="entry name" value="Peptidase_M20_dimer"/>
</dbReference>
<dbReference type="NCBIfam" id="TIGR01891">
    <property type="entry name" value="amidohydrolases"/>
    <property type="match status" value="1"/>
</dbReference>
<dbReference type="PANTHER" id="PTHR11014:SF99">
    <property type="entry name" value="IAA-AMINO ACID HYDROLASE ILR1-LIKE 3"/>
    <property type="match status" value="1"/>
</dbReference>
<dbReference type="PANTHER" id="PTHR11014">
    <property type="entry name" value="PEPTIDASE M20 FAMILY MEMBER"/>
    <property type="match status" value="1"/>
</dbReference>
<dbReference type="Pfam" id="PF07687">
    <property type="entry name" value="M20_dimer"/>
    <property type="match status" value="1"/>
</dbReference>
<dbReference type="Pfam" id="PF01546">
    <property type="entry name" value="Peptidase_M20"/>
    <property type="match status" value="1"/>
</dbReference>
<dbReference type="PIRSF" id="PIRSF005962">
    <property type="entry name" value="Pept_M20D_amidohydro"/>
    <property type="match status" value="1"/>
</dbReference>
<dbReference type="SUPFAM" id="SSF55031">
    <property type="entry name" value="Bacterial exopeptidase dimerisation domain"/>
    <property type="match status" value="1"/>
</dbReference>
<dbReference type="SUPFAM" id="SSF53187">
    <property type="entry name" value="Zn-dependent exopeptidases"/>
    <property type="match status" value="1"/>
</dbReference>
<accession>Q851L6</accession>
<gene>
    <name type="primary">ILL4</name>
    <name type="ordered locus">Os03g0836900</name>
    <name type="ordered locus">LOC_Os03g62070</name>
    <name type="ORF">OSJNBa0042I09.28</name>
</gene>
<protein>
    <recommendedName>
        <fullName>IAA-amino acid hydrolase ILR1-like 4</fullName>
        <ecNumber>3.5.1.-</ecNumber>
    </recommendedName>
</protein>
<feature type="signal peptide" evidence="2">
    <location>
        <begin position="1"/>
        <end status="unknown"/>
    </location>
</feature>
<feature type="chain" id="PRO_0000351640" description="IAA-amino acid hydrolase ILR1-like 4">
    <location>
        <begin status="unknown"/>
        <end position="414"/>
    </location>
</feature>
<name>ILL4_ORYSJ</name>